<evidence type="ECO:0000255" key="1">
    <source>
        <dbReference type="HAMAP-Rule" id="MF_00159"/>
    </source>
</evidence>
<dbReference type="EC" id="1.17.7.3" evidence="1"/>
<dbReference type="EMBL" id="AP006618">
    <property type="protein sequence ID" value="BAD58967.1"/>
    <property type="molecule type" value="Genomic_DNA"/>
</dbReference>
<dbReference type="RefSeq" id="WP_011210652.1">
    <property type="nucleotide sequence ID" value="NC_006361.1"/>
</dbReference>
<dbReference type="SMR" id="Q5YS74"/>
<dbReference type="STRING" id="247156.NFA_41180"/>
<dbReference type="GeneID" id="61134758"/>
<dbReference type="KEGG" id="nfa:NFA_41180"/>
<dbReference type="eggNOG" id="COG0821">
    <property type="taxonomic scope" value="Bacteria"/>
</dbReference>
<dbReference type="HOGENOM" id="CLU_042258_0_0_11"/>
<dbReference type="OrthoDB" id="9803214at2"/>
<dbReference type="UniPathway" id="UPA00056">
    <property type="reaction ID" value="UER00096"/>
</dbReference>
<dbReference type="Proteomes" id="UP000006820">
    <property type="component" value="Chromosome"/>
</dbReference>
<dbReference type="GO" id="GO:0051539">
    <property type="term" value="F:4 iron, 4 sulfur cluster binding"/>
    <property type="evidence" value="ECO:0007669"/>
    <property type="project" value="UniProtKB-UniRule"/>
</dbReference>
<dbReference type="GO" id="GO:0046429">
    <property type="term" value="F:4-hydroxy-3-methylbut-2-en-1-yl diphosphate synthase activity (ferredoxin)"/>
    <property type="evidence" value="ECO:0007669"/>
    <property type="project" value="UniProtKB-UniRule"/>
</dbReference>
<dbReference type="GO" id="GO:0141197">
    <property type="term" value="F:4-hydroxy-3-methylbut-2-enyl-diphosphate synthase activity (flavodoxin)"/>
    <property type="evidence" value="ECO:0007669"/>
    <property type="project" value="UniProtKB-EC"/>
</dbReference>
<dbReference type="GO" id="GO:0005506">
    <property type="term" value="F:iron ion binding"/>
    <property type="evidence" value="ECO:0007669"/>
    <property type="project" value="InterPro"/>
</dbReference>
<dbReference type="GO" id="GO:0019288">
    <property type="term" value="P:isopentenyl diphosphate biosynthetic process, methylerythritol 4-phosphate pathway"/>
    <property type="evidence" value="ECO:0007669"/>
    <property type="project" value="UniProtKB-UniRule"/>
</dbReference>
<dbReference type="GO" id="GO:0016114">
    <property type="term" value="P:terpenoid biosynthetic process"/>
    <property type="evidence" value="ECO:0007669"/>
    <property type="project" value="InterPro"/>
</dbReference>
<dbReference type="FunFam" id="3.20.20.20:FF:000003">
    <property type="entry name" value="4-hydroxy-3-methylbut-2-en-1-yl diphosphate synthase (flavodoxin)"/>
    <property type="match status" value="1"/>
</dbReference>
<dbReference type="FunFam" id="3.30.413.10:FF:000001">
    <property type="entry name" value="4-hydroxy-3-methylbut-2-en-1-yl diphosphate synthase (flavodoxin)"/>
    <property type="match status" value="1"/>
</dbReference>
<dbReference type="Gene3D" id="3.20.20.20">
    <property type="entry name" value="Dihydropteroate synthase-like"/>
    <property type="match status" value="1"/>
</dbReference>
<dbReference type="Gene3D" id="3.30.413.10">
    <property type="entry name" value="Sulfite Reductase Hemoprotein, domain 1"/>
    <property type="match status" value="1"/>
</dbReference>
<dbReference type="HAMAP" id="MF_00159">
    <property type="entry name" value="IspG"/>
    <property type="match status" value="1"/>
</dbReference>
<dbReference type="InterPro" id="IPR011005">
    <property type="entry name" value="Dihydropteroate_synth-like_sf"/>
</dbReference>
<dbReference type="InterPro" id="IPR016425">
    <property type="entry name" value="IspG_bac"/>
</dbReference>
<dbReference type="InterPro" id="IPR004588">
    <property type="entry name" value="IspG_bac-typ"/>
</dbReference>
<dbReference type="InterPro" id="IPR045854">
    <property type="entry name" value="NO2/SO3_Rdtase_4Fe4S_sf"/>
</dbReference>
<dbReference type="NCBIfam" id="TIGR00612">
    <property type="entry name" value="ispG_gcpE"/>
    <property type="match status" value="1"/>
</dbReference>
<dbReference type="NCBIfam" id="NF001540">
    <property type="entry name" value="PRK00366.1"/>
    <property type="match status" value="1"/>
</dbReference>
<dbReference type="PANTHER" id="PTHR30454">
    <property type="entry name" value="4-HYDROXY-3-METHYLBUT-2-EN-1-YL DIPHOSPHATE SYNTHASE"/>
    <property type="match status" value="1"/>
</dbReference>
<dbReference type="PANTHER" id="PTHR30454:SF0">
    <property type="entry name" value="4-HYDROXY-3-METHYLBUT-2-EN-1-YL DIPHOSPHATE SYNTHASE (FERREDOXIN), CHLOROPLASTIC"/>
    <property type="match status" value="1"/>
</dbReference>
<dbReference type="Pfam" id="PF04551">
    <property type="entry name" value="GcpE"/>
    <property type="match status" value="1"/>
</dbReference>
<dbReference type="PIRSF" id="PIRSF004640">
    <property type="entry name" value="IspG"/>
    <property type="match status" value="1"/>
</dbReference>
<dbReference type="SUPFAM" id="SSF51717">
    <property type="entry name" value="Dihydropteroate synthetase-like"/>
    <property type="match status" value="1"/>
</dbReference>
<dbReference type="SUPFAM" id="SSF56014">
    <property type="entry name" value="Nitrite and sulphite reductase 4Fe-4S domain-like"/>
    <property type="match status" value="1"/>
</dbReference>
<feature type="chain" id="PRO_0000190607" description="4-hydroxy-3-methylbut-2-en-1-yl diphosphate synthase (flavodoxin)">
    <location>
        <begin position="1"/>
        <end position="385"/>
    </location>
</feature>
<feature type="binding site" evidence="1">
    <location>
        <position position="282"/>
    </location>
    <ligand>
        <name>[4Fe-4S] cluster</name>
        <dbReference type="ChEBI" id="CHEBI:49883"/>
    </ligand>
</feature>
<feature type="binding site" evidence="1">
    <location>
        <position position="285"/>
    </location>
    <ligand>
        <name>[4Fe-4S] cluster</name>
        <dbReference type="ChEBI" id="CHEBI:49883"/>
    </ligand>
</feature>
<feature type="binding site" evidence="1">
    <location>
        <position position="317"/>
    </location>
    <ligand>
        <name>[4Fe-4S] cluster</name>
        <dbReference type="ChEBI" id="CHEBI:49883"/>
    </ligand>
</feature>
<feature type="binding site" evidence="1">
    <location>
        <position position="324"/>
    </location>
    <ligand>
        <name>[4Fe-4S] cluster</name>
        <dbReference type="ChEBI" id="CHEBI:49883"/>
    </ligand>
</feature>
<protein>
    <recommendedName>
        <fullName evidence="1">4-hydroxy-3-methylbut-2-en-1-yl diphosphate synthase (flavodoxin)</fullName>
        <ecNumber evidence="1">1.17.7.3</ecNumber>
    </recommendedName>
    <alternativeName>
        <fullName evidence="1">1-hydroxy-2-methyl-2-(E)-butenyl 4-diphosphate synthase</fullName>
    </alternativeName>
</protein>
<gene>
    <name evidence="1" type="primary">ispG</name>
    <name type="ordered locus">NFA_41180</name>
</gene>
<sequence>MTSTIGLGMPTAPAAVLAPRRKTRQLMVGSVGVGSDHPVSVQSMTTTKTHDVNATLQQIAQLTASGCDIVRVACPRQEDADALATIAKKSQIPVIADIHFQPRYIFAAIDAGCAAVRVNPGNIKEFDGRVKEVAKAAGAAGIPIRIGVNAGSLDKRMLEKYGKATPEALVESALWEASLFEEHGFGDIKISVKHNDPVIMVEAYRQLAAQCDYPLHLGVTEAGPAFQGTIKSAVAFGALLSEGIGDTIRVSLSAPPVEEVKVGTQILQSLNLRPRKLEIVSCPSCGRAQVDVYTLANEVTAGLEGMEVPLRVAVMGCVVNGPGEAREADLGVASGNGKGQIFVKGQVIKTVPEHQIVETLIEEAMRIAEEMGEQAGSGEPVVTVS</sequence>
<organism>
    <name type="scientific">Nocardia farcinica (strain IFM 10152)</name>
    <dbReference type="NCBI Taxonomy" id="247156"/>
    <lineage>
        <taxon>Bacteria</taxon>
        <taxon>Bacillati</taxon>
        <taxon>Actinomycetota</taxon>
        <taxon>Actinomycetes</taxon>
        <taxon>Mycobacteriales</taxon>
        <taxon>Nocardiaceae</taxon>
        <taxon>Nocardia</taxon>
    </lineage>
</organism>
<reference key="1">
    <citation type="journal article" date="2004" name="Proc. Natl. Acad. Sci. U.S.A.">
        <title>The complete genomic sequence of Nocardia farcinica IFM 10152.</title>
        <authorList>
            <person name="Ishikawa J."/>
            <person name="Yamashita A."/>
            <person name="Mikami Y."/>
            <person name="Hoshino Y."/>
            <person name="Kurita H."/>
            <person name="Hotta K."/>
            <person name="Shiba T."/>
            <person name="Hattori M."/>
        </authorList>
    </citation>
    <scope>NUCLEOTIDE SEQUENCE [LARGE SCALE GENOMIC DNA]</scope>
    <source>
        <strain>IFM 10152</strain>
    </source>
</reference>
<accession>Q5YS74</accession>
<comment type="function">
    <text evidence="1">Converts 2C-methyl-D-erythritol 2,4-cyclodiphosphate (ME-2,4cPP) into 1-hydroxy-2-methyl-2-(E)-butenyl 4-diphosphate.</text>
</comment>
<comment type="catalytic activity">
    <reaction evidence="1">
        <text>(2E)-4-hydroxy-3-methylbut-2-enyl diphosphate + oxidized [flavodoxin] + H2O + 2 H(+) = 2-C-methyl-D-erythritol 2,4-cyclic diphosphate + reduced [flavodoxin]</text>
        <dbReference type="Rhea" id="RHEA:43604"/>
        <dbReference type="Rhea" id="RHEA-COMP:10622"/>
        <dbReference type="Rhea" id="RHEA-COMP:10623"/>
        <dbReference type="ChEBI" id="CHEBI:15377"/>
        <dbReference type="ChEBI" id="CHEBI:15378"/>
        <dbReference type="ChEBI" id="CHEBI:57618"/>
        <dbReference type="ChEBI" id="CHEBI:58210"/>
        <dbReference type="ChEBI" id="CHEBI:58483"/>
        <dbReference type="ChEBI" id="CHEBI:128753"/>
        <dbReference type="EC" id="1.17.7.3"/>
    </reaction>
</comment>
<comment type="cofactor">
    <cofactor evidence="1">
        <name>[4Fe-4S] cluster</name>
        <dbReference type="ChEBI" id="CHEBI:49883"/>
    </cofactor>
    <text evidence="1">Binds 1 [4Fe-4S] cluster.</text>
</comment>
<comment type="pathway">
    <text evidence="1">Isoprenoid biosynthesis; isopentenyl diphosphate biosynthesis via DXP pathway; isopentenyl diphosphate from 1-deoxy-D-xylulose 5-phosphate: step 5/6.</text>
</comment>
<comment type="similarity">
    <text evidence="1">Belongs to the IspG family.</text>
</comment>
<name>ISPG_NOCFA</name>
<keyword id="KW-0004">4Fe-4S</keyword>
<keyword id="KW-0408">Iron</keyword>
<keyword id="KW-0411">Iron-sulfur</keyword>
<keyword id="KW-0414">Isoprene biosynthesis</keyword>
<keyword id="KW-0479">Metal-binding</keyword>
<keyword id="KW-0560">Oxidoreductase</keyword>
<keyword id="KW-1185">Reference proteome</keyword>
<proteinExistence type="inferred from homology"/>